<feature type="chain" id="PRO_0000221230" description="Late embryogenesis abundant protein 1">
    <location>
        <begin position="1"/>
        <end position="143"/>
    </location>
</feature>
<feature type="repeat" description="1">
    <location>
        <begin position="47"/>
        <end position="57"/>
    </location>
</feature>
<feature type="repeat" description="2">
    <location>
        <begin position="69"/>
        <end position="79"/>
    </location>
</feature>
<feature type="repeat" description="3">
    <location>
        <begin position="80"/>
        <end position="90"/>
    </location>
</feature>
<feature type="repeat" description="4">
    <location>
        <begin position="91"/>
        <end position="101"/>
    </location>
</feature>
<feature type="region of interest" description="Disordered" evidence="1">
    <location>
        <begin position="1"/>
        <end position="143"/>
    </location>
</feature>
<feature type="region of interest" description="4 X 11 AA approximate repeats">
    <location>
        <begin position="47"/>
        <end position="101"/>
    </location>
</feature>
<feature type="compositionally biased region" description="Low complexity" evidence="1">
    <location>
        <begin position="1"/>
        <end position="17"/>
    </location>
</feature>
<feature type="compositionally biased region" description="Basic and acidic residues" evidence="1">
    <location>
        <begin position="47"/>
        <end position="60"/>
    </location>
</feature>
<feature type="compositionally biased region" description="Basic and acidic residues" evidence="1">
    <location>
        <begin position="69"/>
        <end position="143"/>
    </location>
</feature>
<dbReference type="EMBL" id="AF423069">
    <property type="protein sequence ID" value="AAL18843.1"/>
    <property type="molecule type" value="Genomic_DNA"/>
</dbReference>
<dbReference type="SMR" id="Q95V77"/>
<dbReference type="OrthoDB" id="5853127at2759"/>
<dbReference type="GO" id="GO:0042802">
    <property type="term" value="F:identical protein binding"/>
    <property type="evidence" value="ECO:0000314"/>
    <property type="project" value="CAFA"/>
</dbReference>
<dbReference type="GO" id="GO:0050821">
    <property type="term" value="P:protein stabilization"/>
    <property type="evidence" value="ECO:0000314"/>
    <property type="project" value="CAFA"/>
</dbReference>
<dbReference type="GO" id="GO:0009269">
    <property type="term" value="P:response to desiccation"/>
    <property type="evidence" value="ECO:0000314"/>
    <property type="project" value="UniProtKB"/>
</dbReference>
<dbReference type="DisProt" id="DP00186"/>
<dbReference type="Gene3D" id="1.20.120.20">
    <property type="entry name" value="Apolipoprotein"/>
    <property type="match status" value="1"/>
</dbReference>
<dbReference type="PANTHER" id="PTHR47372">
    <property type="entry name" value="DAUER UP-REGULATED-RELATED"/>
    <property type="match status" value="1"/>
</dbReference>
<dbReference type="PANTHER" id="PTHR47372:SF5">
    <property type="entry name" value="LATE EMBRYOGENESIS ABUNDANT PROTEIN (LEA) FAMILY PROTEIN"/>
    <property type="match status" value="1"/>
</dbReference>
<dbReference type="SUPFAM" id="SSF58113">
    <property type="entry name" value="Apolipoprotein A-I"/>
    <property type="match status" value="1"/>
</dbReference>
<organism>
    <name type="scientific">Aphelenchoides avenae</name>
    <name type="common">Mycophagous nematode worm</name>
    <name type="synonym">Aphelenchus avenae</name>
    <dbReference type="NCBI Taxonomy" id="70226"/>
    <lineage>
        <taxon>Eukaryota</taxon>
        <taxon>Metazoa</taxon>
        <taxon>Ecdysozoa</taxon>
        <taxon>Nematoda</taxon>
        <taxon>Chromadorea</taxon>
        <taxon>Rhabditida</taxon>
        <taxon>Tylenchina</taxon>
        <taxon>Tylenchomorpha</taxon>
        <taxon>Aphelenchoidea</taxon>
        <taxon>Aphelenchoididae</taxon>
        <taxon>Aphelenchoides</taxon>
    </lineage>
</organism>
<accession>Q95V77</accession>
<protein>
    <recommendedName>
        <fullName>Late embryogenesis abundant protein 1</fullName>
    </recommendedName>
    <alternativeName>
        <fullName>Aavlea1</fullName>
    </alternativeName>
</protein>
<sequence>MSSQQNQNRQGEQQEQGYMEAAKEKVVNAWESTKETLSSTAQAAAEKTAEFRDSAGETIRDLTGQAQEKGQEFKERAGEKAEETKQRAGEKMDETKQRAGEMRENAGQKMEEYKQQGKGKAEELRDTAAEKLHQAGEKVKGRD</sequence>
<comment type="function">
    <text>May be involved in defense against water stress.</text>
</comment>
<comment type="induction">
    <text evidence="2">Up-regulated in response to desiccation stress.</text>
</comment>
<comment type="similarity">
    <text evidence="3">Belongs to the LEA type 4 family.</text>
</comment>
<evidence type="ECO:0000256" key="1">
    <source>
        <dbReference type="SAM" id="MobiDB-lite"/>
    </source>
</evidence>
<evidence type="ECO:0000269" key="2">
    <source>
    </source>
</evidence>
<evidence type="ECO:0000305" key="3"/>
<name>LEA1_APHAV</name>
<keyword id="KW-0677">Repeat</keyword>
<reference key="1">
    <citation type="journal article" date="2002" name="Nature">
        <title>Anhydrobiosis: plant desiccation gene found in a nematode.</title>
        <authorList>
            <person name="Browne J."/>
            <person name="Tunnacliffe A."/>
            <person name="Burnell A."/>
        </authorList>
    </citation>
    <scope>NUCLEOTIDE SEQUENCE [GENOMIC DNA]</scope>
    <scope>INDUCTION</scope>
</reference>
<proteinExistence type="evidence at transcript level"/>